<accession>Q3Z5T6</accession>
<evidence type="ECO:0000255" key="1">
    <source>
        <dbReference type="HAMAP-Rule" id="MF_01025"/>
    </source>
</evidence>
<gene>
    <name evidence="1" type="primary">leuA</name>
    <name type="ordered locus">SSON_0081</name>
</gene>
<comment type="function">
    <text evidence="1">Catalyzes the condensation of the acetyl group of acetyl-CoA with 3-methyl-2-oxobutanoate (2-ketoisovalerate) to form 3-carboxy-3-hydroxy-4-methylpentanoate (2-isopropylmalate).</text>
</comment>
<comment type="catalytic activity">
    <reaction evidence="1">
        <text>3-methyl-2-oxobutanoate + acetyl-CoA + H2O = (2S)-2-isopropylmalate + CoA + H(+)</text>
        <dbReference type="Rhea" id="RHEA:21524"/>
        <dbReference type="ChEBI" id="CHEBI:1178"/>
        <dbReference type="ChEBI" id="CHEBI:11851"/>
        <dbReference type="ChEBI" id="CHEBI:15377"/>
        <dbReference type="ChEBI" id="CHEBI:15378"/>
        <dbReference type="ChEBI" id="CHEBI:57287"/>
        <dbReference type="ChEBI" id="CHEBI:57288"/>
        <dbReference type="EC" id="2.3.3.13"/>
    </reaction>
</comment>
<comment type="cofactor">
    <cofactor evidence="1">
        <name>Mn(2+)</name>
        <dbReference type="ChEBI" id="CHEBI:29035"/>
    </cofactor>
</comment>
<comment type="pathway">
    <text evidence="1">Amino-acid biosynthesis; L-leucine biosynthesis; L-leucine from 3-methyl-2-oxobutanoate: step 1/4.</text>
</comment>
<comment type="subunit">
    <text evidence="1">Homodimer.</text>
</comment>
<comment type="subcellular location">
    <subcellularLocation>
        <location evidence="1">Cytoplasm</location>
    </subcellularLocation>
</comment>
<comment type="similarity">
    <text evidence="1">Belongs to the alpha-IPM synthase/homocitrate synthase family. LeuA type 1 subfamily.</text>
</comment>
<dbReference type="EC" id="2.3.3.13" evidence="1"/>
<dbReference type="EMBL" id="CP000038">
    <property type="protein sequence ID" value="AAZ86876.1"/>
    <property type="molecule type" value="Genomic_DNA"/>
</dbReference>
<dbReference type="RefSeq" id="WP_000082857.1">
    <property type="nucleotide sequence ID" value="NC_007384.1"/>
</dbReference>
<dbReference type="SMR" id="Q3Z5T6"/>
<dbReference type="KEGG" id="ssn:SSON_0081"/>
<dbReference type="HOGENOM" id="CLU_022158_0_1_6"/>
<dbReference type="UniPathway" id="UPA00048">
    <property type="reaction ID" value="UER00070"/>
</dbReference>
<dbReference type="Proteomes" id="UP000002529">
    <property type="component" value="Chromosome"/>
</dbReference>
<dbReference type="GO" id="GO:0005829">
    <property type="term" value="C:cytosol"/>
    <property type="evidence" value="ECO:0007669"/>
    <property type="project" value="TreeGrafter"/>
</dbReference>
<dbReference type="GO" id="GO:0003852">
    <property type="term" value="F:2-isopropylmalate synthase activity"/>
    <property type="evidence" value="ECO:0007669"/>
    <property type="project" value="UniProtKB-UniRule"/>
</dbReference>
<dbReference type="GO" id="GO:0003985">
    <property type="term" value="F:acetyl-CoA C-acetyltransferase activity"/>
    <property type="evidence" value="ECO:0007669"/>
    <property type="project" value="UniProtKB-UniRule"/>
</dbReference>
<dbReference type="GO" id="GO:0030145">
    <property type="term" value="F:manganese ion binding"/>
    <property type="evidence" value="ECO:0007669"/>
    <property type="project" value="UniProtKB-UniRule"/>
</dbReference>
<dbReference type="GO" id="GO:0009098">
    <property type="term" value="P:L-leucine biosynthetic process"/>
    <property type="evidence" value="ECO:0007669"/>
    <property type="project" value="UniProtKB-UniRule"/>
</dbReference>
<dbReference type="CDD" id="cd07940">
    <property type="entry name" value="DRE_TIM_IPMS"/>
    <property type="match status" value="1"/>
</dbReference>
<dbReference type="FunFam" id="1.10.238.260:FF:000001">
    <property type="entry name" value="2-isopropylmalate synthase"/>
    <property type="match status" value="1"/>
</dbReference>
<dbReference type="FunFam" id="3.20.20.70:FF:000010">
    <property type="entry name" value="2-isopropylmalate synthase"/>
    <property type="match status" value="1"/>
</dbReference>
<dbReference type="FunFam" id="3.30.160.270:FF:000001">
    <property type="entry name" value="2-isopropylmalate synthase"/>
    <property type="match status" value="1"/>
</dbReference>
<dbReference type="Gene3D" id="1.10.238.260">
    <property type="match status" value="1"/>
</dbReference>
<dbReference type="Gene3D" id="3.30.160.270">
    <property type="match status" value="1"/>
</dbReference>
<dbReference type="Gene3D" id="3.20.20.70">
    <property type="entry name" value="Aldolase class I"/>
    <property type="match status" value="1"/>
</dbReference>
<dbReference type="HAMAP" id="MF_01025">
    <property type="entry name" value="LeuA_type1"/>
    <property type="match status" value="1"/>
</dbReference>
<dbReference type="InterPro" id="IPR050073">
    <property type="entry name" value="2-IPM_HCS-like"/>
</dbReference>
<dbReference type="InterPro" id="IPR013709">
    <property type="entry name" value="2-isopropylmalate_synth_dimer"/>
</dbReference>
<dbReference type="InterPro" id="IPR002034">
    <property type="entry name" value="AIPM/Hcit_synth_CS"/>
</dbReference>
<dbReference type="InterPro" id="IPR013785">
    <property type="entry name" value="Aldolase_TIM"/>
</dbReference>
<dbReference type="InterPro" id="IPR054691">
    <property type="entry name" value="LeuA/HCS_post-cat"/>
</dbReference>
<dbReference type="InterPro" id="IPR036230">
    <property type="entry name" value="LeuA_allosteric_dom_sf"/>
</dbReference>
<dbReference type="InterPro" id="IPR005671">
    <property type="entry name" value="LeuA_bact_synth"/>
</dbReference>
<dbReference type="InterPro" id="IPR000891">
    <property type="entry name" value="PYR_CT"/>
</dbReference>
<dbReference type="NCBIfam" id="TIGR00973">
    <property type="entry name" value="leuA_bact"/>
    <property type="match status" value="1"/>
</dbReference>
<dbReference type="NCBIfam" id="NF002084">
    <property type="entry name" value="PRK00915.1-1"/>
    <property type="match status" value="1"/>
</dbReference>
<dbReference type="NCBIfam" id="NF002086">
    <property type="entry name" value="PRK00915.1-3"/>
    <property type="match status" value="1"/>
</dbReference>
<dbReference type="PANTHER" id="PTHR10277:SF9">
    <property type="entry name" value="2-ISOPROPYLMALATE SYNTHASE 1, CHLOROPLASTIC-RELATED"/>
    <property type="match status" value="1"/>
</dbReference>
<dbReference type="PANTHER" id="PTHR10277">
    <property type="entry name" value="HOMOCITRATE SYNTHASE-RELATED"/>
    <property type="match status" value="1"/>
</dbReference>
<dbReference type="Pfam" id="PF22617">
    <property type="entry name" value="HCS_D2"/>
    <property type="match status" value="1"/>
</dbReference>
<dbReference type="Pfam" id="PF00682">
    <property type="entry name" value="HMGL-like"/>
    <property type="match status" value="1"/>
</dbReference>
<dbReference type="Pfam" id="PF08502">
    <property type="entry name" value="LeuA_dimer"/>
    <property type="match status" value="1"/>
</dbReference>
<dbReference type="SMART" id="SM00917">
    <property type="entry name" value="LeuA_dimer"/>
    <property type="match status" value="1"/>
</dbReference>
<dbReference type="SUPFAM" id="SSF110921">
    <property type="entry name" value="2-isopropylmalate synthase LeuA, allosteric (dimerisation) domain"/>
    <property type="match status" value="1"/>
</dbReference>
<dbReference type="SUPFAM" id="SSF51569">
    <property type="entry name" value="Aldolase"/>
    <property type="match status" value="1"/>
</dbReference>
<dbReference type="PROSITE" id="PS00815">
    <property type="entry name" value="AIPM_HOMOCIT_SYNTH_1"/>
    <property type="match status" value="1"/>
</dbReference>
<dbReference type="PROSITE" id="PS00816">
    <property type="entry name" value="AIPM_HOMOCIT_SYNTH_2"/>
    <property type="match status" value="1"/>
</dbReference>
<dbReference type="PROSITE" id="PS50991">
    <property type="entry name" value="PYR_CT"/>
    <property type="match status" value="1"/>
</dbReference>
<name>LEU1_SHISS</name>
<proteinExistence type="inferred from homology"/>
<reference key="1">
    <citation type="journal article" date="2005" name="Nucleic Acids Res.">
        <title>Genome dynamics and diversity of Shigella species, the etiologic agents of bacillary dysentery.</title>
        <authorList>
            <person name="Yang F."/>
            <person name="Yang J."/>
            <person name="Zhang X."/>
            <person name="Chen L."/>
            <person name="Jiang Y."/>
            <person name="Yan Y."/>
            <person name="Tang X."/>
            <person name="Wang J."/>
            <person name="Xiong Z."/>
            <person name="Dong J."/>
            <person name="Xue Y."/>
            <person name="Zhu Y."/>
            <person name="Xu X."/>
            <person name="Sun L."/>
            <person name="Chen S."/>
            <person name="Nie H."/>
            <person name="Peng J."/>
            <person name="Xu J."/>
            <person name="Wang Y."/>
            <person name="Yuan Z."/>
            <person name="Wen Y."/>
            <person name="Yao Z."/>
            <person name="Shen Y."/>
            <person name="Qiang B."/>
            <person name="Hou Y."/>
            <person name="Yu J."/>
            <person name="Jin Q."/>
        </authorList>
    </citation>
    <scope>NUCLEOTIDE SEQUENCE [LARGE SCALE GENOMIC DNA]</scope>
    <source>
        <strain>Ss046</strain>
    </source>
</reference>
<organism>
    <name type="scientific">Shigella sonnei (strain Ss046)</name>
    <dbReference type="NCBI Taxonomy" id="300269"/>
    <lineage>
        <taxon>Bacteria</taxon>
        <taxon>Pseudomonadati</taxon>
        <taxon>Pseudomonadota</taxon>
        <taxon>Gammaproteobacteria</taxon>
        <taxon>Enterobacterales</taxon>
        <taxon>Enterobacteriaceae</taxon>
        <taxon>Shigella</taxon>
    </lineage>
</organism>
<protein>
    <recommendedName>
        <fullName evidence="1">2-isopropylmalate synthase</fullName>
        <ecNumber evidence="1">2.3.3.13</ecNumber>
    </recommendedName>
    <alternativeName>
        <fullName evidence="1">Alpha-IPM synthase</fullName>
    </alternativeName>
    <alternativeName>
        <fullName evidence="1">Alpha-isopropylmalate synthase</fullName>
    </alternativeName>
</protein>
<feature type="chain" id="PRO_1000149299" description="2-isopropylmalate synthase">
    <location>
        <begin position="1"/>
        <end position="523"/>
    </location>
</feature>
<feature type="domain" description="Pyruvate carboxyltransferase" evidence="1">
    <location>
        <begin position="5"/>
        <end position="267"/>
    </location>
</feature>
<feature type="region of interest" description="Regulatory domain" evidence="1">
    <location>
        <begin position="392"/>
        <end position="523"/>
    </location>
</feature>
<feature type="binding site" evidence="1">
    <location>
        <position position="14"/>
    </location>
    <ligand>
        <name>Mn(2+)</name>
        <dbReference type="ChEBI" id="CHEBI:29035"/>
    </ligand>
</feature>
<feature type="binding site" evidence="1">
    <location>
        <position position="202"/>
    </location>
    <ligand>
        <name>Mn(2+)</name>
        <dbReference type="ChEBI" id="CHEBI:29035"/>
    </ligand>
</feature>
<feature type="binding site" evidence="1">
    <location>
        <position position="204"/>
    </location>
    <ligand>
        <name>Mn(2+)</name>
        <dbReference type="ChEBI" id="CHEBI:29035"/>
    </ligand>
</feature>
<feature type="binding site" evidence="1">
    <location>
        <position position="238"/>
    </location>
    <ligand>
        <name>Mn(2+)</name>
        <dbReference type="ChEBI" id="CHEBI:29035"/>
    </ligand>
</feature>
<sequence length="523" mass="57314">MSQQVIIFDTTLRDGEQALQASLSVKEKLQIALALERMGVDVMEVGFPVSSPGDFESVQTIARQVKNSRVCALARCVEKDIDVAAESLKVAEAFRIHTFIATSPMHIATKLRSTLDEVIERAIYMVKRARNYTDDVEFSCEDAGRTPIADLARVVEAAINAGATTINIPDTVGYTMPFEFAGIISGLYERVPNIDKAIISVHTHDDLGLAVGNSLAAVHAGARQVEGAMNGIGERAGNCSLEEVIMAIKVRKDILNVHTAINHQEIWRTSQLVSQICNMPIPANKAIVGSSAFAHSSGIHQDGVLKNRENYEIMTPESIGLNQIQLNLTSRSGRAAVKHRMDEMGYKESEYNLDNLYDAFLKLADKKGQVFDYDLEALAFIGKQQEEPEHFRLDYFSVQSGSNDIATAAVKLACGEEVKAEAANGNGPVDAVYQAINRITDYNVELVKYSLTAKGHGKDALGQVDIVANYNGRRFHGVGLATDIVESSAKAMVHVLNNIWRAAEVEKELQRKAQHNENNKETV</sequence>
<keyword id="KW-0028">Amino-acid biosynthesis</keyword>
<keyword id="KW-0100">Branched-chain amino acid biosynthesis</keyword>
<keyword id="KW-0963">Cytoplasm</keyword>
<keyword id="KW-0432">Leucine biosynthesis</keyword>
<keyword id="KW-0464">Manganese</keyword>
<keyword id="KW-0479">Metal-binding</keyword>
<keyword id="KW-1185">Reference proteome</keyword>
<keyword id="KW-0808">Transferase</keyword>